<reference key="1">
    <citation type="journal article" date="1991" name="Proc. Natl. Acad. Sci. U.S.A.">
        <title>A mutation in a Rhodobacter capsulatus gene encoding an integration host factor-like protein impairs in vivo hydrogenase expression.</title>
        <authorList>
            <person name="Toussaint B."/>
            <person name="Bosc C."/>
            <person name="Richaud P."/>
            <person name="Colbeau A."/>
            <person name="Vignais P.M."/>
        </authorList>
    </citation>
    <scope>NUCLEOTIDE SEQUENCE [GENOMIC DNA]</scope>
</reference>
<proteinExistence type="inferred from homology"/>
<evidence type="ECO:0000255" key="1">
    <source>
        <dbReference type="HAMAP-Rule" id="MF_00019"/>
    </source>
</evidence>
<sequence>MVKLFKQETTTVGVEADVTSSRGCPAAAQAPDVSGALISGVPVSAPLVLSIDAMGGDRGPAAVLDGIALARRKYPDLHFLVHGPEADVAPLVKARRLKSCVTIRHATGVVTMHDKPAAVMRGGKDTSMWSTIDAVRDGAAQVAVSCGNTGALMAVSMLRLRKMPGVNRPAIAAFWPCKNPSGFNIMLDMGADVKAEARDLLTYALMGSSYARNALGLDRPRVGLLNVGTEEHKGHAELKIAAEMIGAMETAGGYEFVGFVEGNDLPGSRVDVIVTDGFTGNVALKTGEGTAKFAGELMREAFTSSLLSKLGALLASGALKRLKAKIDPRRVNGGVFLGLNGTVIKSHGGADATGVAAAIDLAARLAGLGFAERLAARVALASANGQDAASAEAGIENAK</sequence>
<name>PLSX_RHOCA</name>
<protein>
    <recommendedName>
        <fullName evidence="1">Phosphate acyltransferase</fullName>
        <ecNumber evidence="1">2.3.1.274</ecNumber>
    </recommendedName>
    <alternativeName>
        <fullName evidence="1">Acyl-ACP phosphotransacylase</fullName>
    </alternativeName>
    <alternativeName>
        <fullName evidence="1">Acyl-[acyl-carrier-protein]--phosphate acyltransferase</fullName>
    </alternativeName>
    <alternativeName>
        <fullName evidence="1">Phosphate-acyl-ACP acyltransferase</fullName>
    </alternativeName>
</protein>
<gene>
    <name evidence="1" type="primary">plsX</name>
</gene>
<dbReference type="EC" id="2.3.1.274" evidence="1"/>
<dbReference type="EMBL" id="M84030">
    <property type="protein sequence ID" value="AAA26126.1"/>
    <property type="molecule type" value="Genomic_DNA"/>
</dbReference>
<dbReference type="PIR" id="B41608">
    <property type="entry name" value="B41608"/>
</dbReference>
<dbReference type="SMR" id="P30789"/>
<dbReference type="UniPathway" id="UPA00085"/>
<dbReference type="GO" id="GO:0005737">
    <property type="term" value="C:cytoplasm"/>
    <property type="evidence" value="ECO:0007669"/>
    <property type="project" value="UniProtKB-SubCell"/>
</dbReference>
<dbReference type="GO" id="GO:0043811">
    <property type="term" value="F:phosphate:acyl-[acyl carrier protein] acyltransferase activity"/>
    <property type="evidence" value="ECO:0007669"/>
    <property type="project" value="UniProtKB-UniRule"/>
</dbReference>
<dbReference type="GO" id="GO:0006633">
    <property type="term" value="P:fatty acid biosynthetic process"/>
    <property type="evidence" value="ECO:0007669"/>
    <property type="project" value="UniProtKB-UniRule"/>
</dbReference>
<dbReference type="GO" id="GO:0008654">
    <property type="term" value="P:phospholipid biosynthetic process"/>
    <property type="evidence" value="ECO:0007669"/>
    <property type="project" value="UniProtKB-KW"/>
</dbReference>
<dbReference type="Gene3D" id="3.40.718.10">
    <property type="entry name" value="Isopropylmalate Dehydrogenase"/>
    <property type="match status" value="1"/>
</dbReference>
<dbReference type="HAMAP" id="MF_00019">
    <property type="entry name" value="PlsX"/>
    <property type="match status" value="1"/>
</dbReference>
<dbReference type="InterPro" id="IPR003664">
    <property type="entry name" value="FA_synthesis"/>
</dbReference>
<dbReference type="InterPro" id="IPR012281">
    <property type="entry name" value="Phospholipid_synth_PlsX-like"/>
</dbReference>
<dbReference type="NCBIfam" id="TIGR00182">
    <property type="entry name" value="plsX"/>
    <property type="match status" value="1"/>
</dbReference>
<dbReference type="PANTHER" id="PTHR30100">
    <property type="entry name" value="FATTY ACID/PHOSPHOLIPID SYNTHESIS PROTEIN PLSX"/>
    <property type="match status" value="1"/>
</dbReference>
<dbReference type="PANTHER" id="PTHR30100:SF1">
    <property type="entry name" value="PHOSPHATE ACYLTRANSFERASE"/>
    <property type="match status" value="1"/>
</dbReference>
<dbReference type="Pfam" id="PF02504">
    <property type="entry name" value="FA_synthesis"/>
    <property type="match status" value="1"/>
</dbReference>
<dbReference type="PIRSF" id="PIRSF002465">
    <property type="entry name" value="Phsphlp_syn_PlsX"/>
    <property type="match status" value="1"/>
</dbReference>
<dbReference type="SUPFAM" id="SSF53659">
    <property type="entry name" value="Isocitrate/Isopropylmalate dehydrogenase-like"/>
    <property type="match status" value="1"/>
</dbReference>
<accession>P30789</accession>
<organism>
    <name type="scientific">Rhodobacter capsulatus</name>
    <name type="common">Rhodopseudomonas capsulata</name>
    <dbReference type="NCBI Taxonomy" id="1061"/>
    <lineage>
        <taxon>Bacteria</taxon>
        <taxon>Pseudomonadati</taxon>
        <taxon>Pseudomonadota</taxon>
        <taxon>Alphaproteobacteria</taxon>
        <taxon>Rhodobacterales</taxon>
        <taxon>Rhodobacter group</taxon>
        <taxon>Rhodobacter</taxon>
    </lineage>
</organism>
<keyword id="KW-0963">Cytoplasm</keyword>
<keyword id="KW-0444">Lipid biosynthesis</keyword>
<keyword id="KW-0443">Lipid metabolism</keyword>
<keyword id="KW-0594">Phospholipid biosynthesis</keyword>
<keyword id="KW-1208">Phospholipid metabolism</keyword>
<keyword id="KW-0808">Transferase</keyword>
<comment type="function">
    <text evidence="1">Catalyzes the reversible formation of acyl-phosphate (acyl-PO(4)) from acyl-[acyl-carrier-protein] (acyl-ACP). This enzyme utilizes acyl-ACP as fatty acyl donor, but not acyl-CoA.</text>
</comment>
<comment type="catalytic activity">
    <reaction evidence="1">
        <text>a fatty acyl-[ACP] + phosphate = an acyl phosphate + holo-[ACP]</text>
        <dbReference type="Rhea" id="RHEA:42292"/>
        <dbReference type="Rhea" id="RHEA-COMP:9685"/>
        <dbReference type="Rhea" id="RHEA-COMP:14125"/>
        <dbReference type="ChEBI" id="CHEBI:43474"/>
        <dbReference type="ChEBI" id="CHEBI:59918"/>
        <dbReference type="ChEBI" id="CHEBI:64479"/>
        <dbReference type="ChEBI" id="CHEBI:138651"/>
        <dbReference type="EC" id="2.3.1.274"/>
    </reaction>
</comment>
<comment type="pathway">
    <text evidence="1">Lipid metabolism; phospholipid metabolism.</text>
</comment>
<comment type="subunit">
    <text evidence="1">Homodimer. Probably interacts with PlsY.</text>
</comment>
<comment type="subcellular location">
    <subcellularLocation>
        <location evidence="1">Cytoplasm</location>
    </subcellularLocation>
    <text evidence="1">Associated with the membrane possibly through PlsY.</text>
</comment>
<comment type="similarity">
    <text evidence="1">Belongs to the PlsX family.</text>
</comment>
<feature type="chain" id="PRO_0000189928" description="Phosphate acyltransferase">
    <location>
        <begin position="1"/>
        <end position="399"/>
    </location>
</feature>